<name>H2B2_KLULA</name>
<dbReference type="EMBL" id="CR382125">
    <property type="protein sequence ID" value="CAG99818.1"/>
    <property type="molecule type" value="Genomic_DNA"/>
</dbReference>
<dbReference type="RefSeq" id="XP_454731.1">
    <property type="nucleotide sequence ID" value="XM_454731.1"/>
</dbReference>
<dbReference type="SMR" id="Q6CMV8"/>
<dbReference type="FunCoup" id="Q6CMV8">
    <property type="interactions" value="1278"/>
</dbReference>
<dbReference type="STRING" id="284590.Q6CMV8"/>
<dbReference type="PaxDb" id="284590-Q6CMV8"/>
<dbReference type="KEGG" id="kla:KLLA0_E17337g"/>
<dbReference type="eggNOG" id="KOG1744">
    <property type="taxonomic scope" value="Eukaryota"/>
</dbReference>
<dbReference type="HOGENOM" id="CLU_075666_1_3_1"/>
<dbReference type="InParanoid" id="Q6CMV8"/>
<dbReference type="OMA" id="PLVCHIS"/>
<dbReference type="Proteomes" id="UP000000598">
    <property type="component" value="Chromosome E"/>
</dbReference>
<dbReference type="GO" id="GO:0000786">
    <property type="term" value="C:nucleosome"/>
    <property type="evidence" value="ECO:0007669"/>
    <property type="project" value="UniProtKB-KW"/>
</dbReference>
<dbReference type="GO" id="GO:0005634">
    <property type="term" value="C:nucleus"/>
    <property type="evidence" value="ECO:0007669"/>
    <property type="project" value="UniProtKB-SubCell"/>
</dbReference>
<dbReference type="GO" id="GO:0003677">
    <property type="term" value="F:DNA binding"/>
    <property type="evidence" value="ECO:0007669"/>
    <property type="project" value="UniProtKB-KW"/>
</dbReference>
<dbReference type="GO" id="GO:0046982">
    <property type="term" value="F:protein heterodimerization activity"/>
    <property type="evidence" value="ECO:0007669"/>
    <property type="project" value="InterPro"/>
</dbReference>
<dbReference type="GO" id="GO:0030527">
    <property type="term" value="F:structural constituent of chromatin"/>
    <property type="evidence" value="ECO:0007669"/>
    <property type="project" value="InterPro"/>
</dbReference>
<dbReference type="CDD" id="cd22910">
    <property type="entry name" value="HFD_H2B"/>
    <property type="match status" value="1"/>
</dbReference>
<dbReference type="FunFam" id="1.10.20.10:FF:000014">
    <property type="entry name" value="Histone H2B"/>
    <property type="match status" value="1"/>
</dbReference>
<dbReference type="Gene3D" id="1.10.20.10">
    <property type="entry name" value="Histone, subunit A"/>
    <property type="match status" value="1"/>
</dbReference>
<dbReference type="InterPro" id="IPR009072">
    <property type="entry name" value="Histone-fold"/>
</dbReference>
<dbReference type="InterPro" id="IPR007125">
    <property type="entry name" value="Histone_H2A/H2B/H3"/>
</dbReference>
<dbReference type="InterPro" id="IPR000558">
    <property type="entry name" value="Histone_H2B"/>
</dbReference>
<dbReference type="InterPro" id="IPR055333">
    <property type="entry name" value="HISTONE_H2B_site"/>
</dbReference>
<dbReference type="PANTHER" id="PTHR23428">
    <property type="entry name" value="HISTONE H2B"/>
    <property type="match status" value="1"/>
</dbReference>
<dbReference type="Pfam" id="PF00125">
    <property type="entry name" value="Histone"/>
    <property type="match status" value="1"/>
</dbReference>
<dbReference type="PRINTS" id="PR00621">
    <property type="entry name" value="HISTONEH2B"/>
</dbReference>
<dbReference type="SMART" id="SM00427">
    <property type="entry name" value="H2B"/>
    <property type="match status" value="1"/>
</dbReference>
<dbReference type="SUPFAM" id="SSF47113">
    <property type="entry name" value="Histone-fold"/>
    <property type="match status" value="1"/>
</dbReference>
<dbReference type="PROSITE" id="PS00357">
    <property type="entry name" value="HISTONE_H2B"/>
    <property type="match status" value="1"/>
</dbReference>
<comment type="function">
    <text>Core component of nucleosome. Nucleosomes wrap and compact DNA into chromatin, limiting DNA accessibility to the cellular machineries which require DNA as a template. Histones thereby play a central role in transcription regulation, DNA repair, DNA replication and chromosomal stability. DNA accessibility is regulated via a complex set of post-translational modifications of histones, also called histone code, and nucleosome remodeling.</text>
</comment>
<comment type="subunit">
    <text>The nucleosome is a histone octamer containing two molecules each of H2A, H2B, H3 and H4 assembled in one H3-H4 heterotetramer and two H2A-H2B heterodimers. The octamer wraps approximately 147 bp of DNA.</text>
</comment>
<comment type="subcellular location">
    <subcellularLocation>
        <location evidence="1">Nucleus</location>
    </subcellularLocation>
    <subcellularLocation>
        <location evidence="1">Chromosome</location>
    </subcellularLocation>
</comment>
<comment type="PTM">
    <text evidence="1">Monoubiquitinated by the UBC2-BRE1 complex to form H2BK123ub1. H2BK123ub1 gives a specific tag for epigenetic transcriptional activation and is also prerequisite for H3K4me and H3K79me formation. H2BK123ub1 also modulates the formation of double-strand breaks during meiosis and is a prerequisite for DNA-damage checkpoint activation (By similarity).</text>
</comment>
<comment type="PTM">
    <text evidence="1">Phosphorylated by STE20 to form H2BS10ph during progression through meiotic prophase. May be correlated with chromosome condensation (By similarity).</text>
</comment>
<comment type="PTM">
    <text evidence="1">Acetylated by GCN5 to form H2BK11ac and H2BK16ac. H2BK16ac can also be formed by ESA1. Acetylation of N-terminal lysines and particularly formation of H2BK11acK16ac has a positive effect on transcription (By similarity).</text>
</comment>
<comment type="PTM">
    <text evidence="1">Sumoylation to form H2BK6su or H2BK7su, and probably also H2BK16su or H2BK17su, occurs preferentially near the telomeres and represses gene transcription.</text>
</comment>
<comment type="similarity">
    <text evidence="3">Belongs to the histone H2B family.</text>
</comment>
<comment type="caution">
    <text evidence="3">To ensure consistency between histone entries, we follow the 'Brno' nomenclature for histone modifications, with positions referring to those used in the literature for the 'closest' model organism. Due to slight variations in histone sequences between organisms and to the presence of initiator methionine in UniProtKB/Swiss-Prot sequences, the actual positions of modified amino acids in the sequence generally differ. In this entry the following conventions are used: H2BK6ac = acetylated Lys-7; H2BK6su = sumoylated Lys-7; H2BK7ac = acetylated Lys-8; H2BK7su = sumoylated Lys-8; H2BS10ph = phosphorylated Ser-11; H2BK11ac = acetylated Lys-12; H2BK16ac = acetylated Lys-17; H2BK16su = sumoylated Lys-17; H2BK17su = sumoylated Lys-18; H2BK123ub1 = monoubiquitinated Lys-125.</text>
</comment>
<evidence type="ECO:0000250" key="1"/>
<evidence type="ECO:0000256" key="2">
    <source>
        <dbReference type="SAM" id="MobiDB-lite"/>
    </source>
</evidence>
<evidence type="ECO:0000305" key="3"/>
<reference key="1">
    <citation type="journal article" date="2004" name="Nature">
        <title>Genome evolution in yeasts.</title>
        <authorList>
            <person name="Dujon B."/>
            <person name="Sherman D."/>
            <person name="Fischer G."/>
            <person name="Durrens P."/>
            <person name="Casaregola S."/>
            <person name="Lafontaine I."/>
            <person name="de Montigny J."/>
            <person name="Marck C."/>
            <person name="Neuveglise C."/>
            <person name="Talla E."/>
            <person name="Goffard N."/>
            <person name="Frangeul L."/>
            <person name="Aigle M."/>
            <person name="Anthouard V."/>
            <person name="Babour A."/>
            <person name="Barbe V."/>
            <person name="Barnay S."/>
            <person name="Blanchin S."/>
            <person name="Beckerich J.-M."/>
            <person name="Beyne E."/>
            <person name="Bleykasten C."/>
            <person name="Boisrame A."/>
            <person name="Boyer J."/>
            <person name="Cattolico L."/>
            <person name="Confanioleri F."/>
            <person name="de Daruvar A."/>
            <person name="Despons L."/>
            <person name="Fabre E."/>
            <person name="Fairhead C."/>
            <person name="Ferry-Dumazet H."/>
            <person name="Groppi A."/>
            <person name="Hantraye F."/>
            <person name="Hennequin C."/>
            <person name="Jauniaux N."/>
            <person name="Joyet P."/>
            <person name="Kachouri R."/>
            <person name="Kerrest A."/>
            <person name="Koszul R."/>
            <person name="Lemaire M."/>
            <person name="Lesur I."/>
            <person name="Ma L."/>
            <person name="Muller H."/>
            <person name="Nicaud J.-M."/>
            <person name="Nikolski M."/>
            <person name="Oztas S."/>
            <person name="Ozier-Kalogeropoulos O."/>
            <person name="Pellenz S."/>
            <person name="Potier S."/>
            <person name="Richard G.-F."/>
            <person name="Straub M.-L."/>
            <person name="Suleau A."/>
            <person name="Swennen D."/>
            <person name="Tekaia F."/>
            <person name="Wesolowski-Louvel M."/>
            <person name="Westhof E."/>
            <person name="Wirth B."/>
            <person name="Zeniou-Meyer M."/>
            <person name="Zivanovic Y."/>
            <person name="Bolotin-Fukuhara M."/>
            <person name="Thierry A."/>
            <person name="Bouchier C."/>
            <person name="Caudron B."/>
            <person name="Scarpelli C."/>
            <person name="Gaillardin C."/>
            <person name="Weissenbach J."/>
            <person name="Wincker P."/>
            <person name="Souciet J.-L."/>
        </authorList>
    </citation>
    <scope>NUCLEOTIDE SEQUENCE [LARGE SCALE GENOMIC DNA]</scope>
    <source>
        <strain>ATCC 8585 / CBS 2359 / DSM 70799 / NBRC 1267 / NRRL Y-1140 / WM37</strain>
    </source>
</reference>
<proteinExistence type="inferred from homology"/>
<sequence>MAPKAEKKPASKAPAEKKPAAKKTSSSVDPSKKRTKARKETYSSYIYKVLKQTHPDTGISQKSMSILNSFVNDIFERIATESSKLAAYNKKSTISAREIQTAVRLILPGELAKHAVSEGTRAVTKYSSSTQA</sequence>
<protein>
    <recommendedName>
        <fullName>Histone H2B.2</fullName>
    </recommendedName>
</protein>
<feature type="initiator methionine" description="Removed" evidence="1">
    <location>
        <position position="1"/>
    </location>
</feature>
<feature type="chain" id="PRO_0000245297" description="Histone H2B.2">
    <location>
        <begin position="2"/>
        <end position="132"/>
    </location>
</feature>
<feature type="region of interest" description="Disordered" evidence="2">
    <location>
        <begin position="1"/>
        <end position="39"/>
    </location>
</feature>
<feature type="compositionally biased region" description="Basic and acidic residues" evidence="2">
    <location>
        <begin position="1"/>
        <end position="19"/>
    </location>
</feature>
<feature type="modified residue" description="N6-acetyllysine; alternate" evidence="1">
    <location>
        <position position="7"/>
    </location>
</feature>
<feature type="modified residue" description="N6-acetyllysine; alternate" evidence="1">
    <location>
        <position position="8"/>
    </location>
</feature>
<feature type="modified residue" description="Phosphoserine" evidence="1">
    <location>
        <position position="11"/>
    </location>
</feature>
<feature type="modified residue" description="N6-acetyllysine" evidence="1">
    <location>
        <position position="12"/>
    </location>
</feature>
<feature type="modified residue" description="N6-acetyllysine; alternate" evidence="1">
    <location>
        <position position="17"/>
    </location>
</feature>
<feature type="cross-link" description="Glycyl lysine isopeptide (Lys-Gly) (interchain with G-Cter in SUMO); alternate" evidence="1">
    <location>
        <position position="7"/>
    </location>
</feature>
<feature type="cross-link" description="Glycyl lysine isopeptide (Lys-Gly) (interchain with G-Cter in SUMO); alternate" evidence="1">
    <location>
        <position position="8"/>
    </location>
</feature>
<feature type="cross-link" description="Glycyl lysine isopeptide (Lys-Gly) (interchain with G-Cter in SUMO); alternate" evidence="1">
    <location>
        <position position="17"/>
    </location>
</feature>
<feature type="cross-link" description="Glycyl lysine isopeptide (Lys-Gly) (interchain with G-Cter in SUMO)" evidence="1">
    <location>
        <position position="18"/>
    </location>
</feature>
<feature type="cross-link" description="Glycyl lysine isopeptide (Lys-Gly) (interchain with G-Cter in ubiquitin)" evidence="1">
    <location>
        <position position="125"/>
    </location>
</feature>
<gene>
    <name type="primary">HTB1</name>
    <name type="ordered locus">KLLA0E17391g</name>
</gene>
<keyword id="KW-0007">Acetylation</keyword>
<keyword id="KW-0158">Chromosome</keyword>
<keyword id="KW-0238">DNA-binding</keyword>
<keyword id="KW-1017">Isopeptide bond</keyword>
<keyword id="KW-0544">Nucleosome core</keyword>
<keyword id="KW-0539">Nucleus</keyword>
<keyword id="KW-0597">Phosphoprotein</keyword>
<keyword id="KW-1185">Reference proteome</keyword>
<keyword id="KW-0832">Ubl conjugation</keyword>
<accession>Q6CMV8</accession>
<organism>
    <name type="scientific">Kluyveromyces lactis (strain ATCC 8585 / CBS 2359 / DSM 70799 / NBRC 1267 / NRRL Y-1140 / WM37)</name>
    <name type="common">Yeast</name>
    <name type="synonym">Candida sphaerica</name>
    <dbReference type="NCBI Taxonomy" id="284590"/>
    <lineage>
        <taxon>Eukaryota</taxon>
        <taxon>Fungi</taxon>
        <taxon>Dikarya</taxon>
        <taxon>Ascomycota</taxon>
        <taxon>Saccharomycotina</taxon>
        <taxon>Saccharomycetes</taxon>
        <taxon>Saccharomycetales</taxon>
        <taxon>Saccharomycetaceae</taxon>
        <taxon>Kluyveromyces</taxon>
    </lineage>
</organism>